<protein>
    <recommendedName>
        <fullName evidence="1">S-adenosylmethionine sensor upstream of mTORC1</fullName>
    </recommendedName>
    <alternativeName>
        <fullName evidence="1">Probable methyltransferase BMT2 homolog</fullName>
        <ecNumber evidence="1">2.1.1.-</ecNumber>
    </alternativeName>
</protein>
<accession>Q0P410</accession>
<evidence type="ECO:0000255" key="1">
    <source>
        <dbReference type="HAMAP-Rule" id="MF_03044"/>
    </source>
</evidence>
<evidence type="ECO:0000256" key="2">
    <source>
        <dbReference type="SAM" id="MobiDB-lite"/>
    </source>
</evidence>
<evidence type="ECO:0000303" key="3">
    <source ref="1"/>
</evidence>
<gene>
    <name evidence="1" type="primary">samtor</name>
    <name evidence="1" type="synonym">bmt2</name>
    <name evidence="3" type="ORF">zgc:153606</name>
</gene>
<proteinExistence type="evidence at transcript level"/>
<name>SAMTR_DANRE</name>
<dbReference type="EC" id="2.1.1.-" evidence="1"/>
<dbReference type="EMBL" id="BC122347">
    <property type="protein sequence ID" value="AAI22348.1"/>
    <property type="molecule type" value="mRNA"/>
</dbReference>
<dbReference type="RefSeq" id="NP_001070615.1">
    <property type="nucleotide sequence ID" value="NM_001077147.1"/>
</dbReference>
<dbReference type="SMR" id="Q0P410"/>
<dbReference type="FunCoup" id="Q0P410">
    <property type="interactions" value="1273"/>
</dbReference>
<dbReference type="STRING" id="7955.ENSDARP00000084049"/>
<dbReference type="PaxDb" id="7955-ENSDARP00000084049"/>
<dbReference type="GeneID" id="558558"/>
<dbReference type="KEGG" id="dre:558558"/>
<dbReference type="AGR" id="ZFIN:ZDB-GENE-060825-17"/>
<dbReference type="CTD" id="154743"/>
<dbReference type="ZFIN" id="ZDB-GENE-060825-17">
    <property type="gene designation" value="samtor"/>
</dbReference>
<dbReference type="eggNOG" id="ENOG502QRK4">
    <property type="taxonomic scope" value="Eukaryota"/>
</dbReference>
<dbReference type="InParanoid" id="Q0P410"/>
<dbReference type="OrthoDB" id="5954793at2759"/>
<dbReference type="PhylomeDB" id="Q0P410"/>
<dbReference type="PRO" id="PR:Q0P410"/>
<dbReference type="Proteomes" id="UP000000437">
    <property type="component" value="Alternate scaffold 25"/>
</dbReference>
<dbReference type="Proteomes" id="UP000000437">
    <property type="component" value="Chromosome 25"/>
</dbReference>
<dbReference type="GO" id="GO:0008168">
    <property type="term" value="F:methyltransferase activity"/>
    <property type="evidence" value="ECO:0007669"/>
    <property type="project" value="UniProtKB-UniRule"/>
</dbReference>
<dbReference type="GO" id="GO:1904047">
    <property type="term" value="F:S-adenosyl-L-methionine binding"/>
    <property type="evidence" value="ECO:0000250"/>
    <property type="project" value="UniProtKB"/>
</dbReference>
<dbReference type="GO" id="GO:0034198">
    <property type="term" value="P:cellular response to amino acid starvation"/>
    <property type="evidence" value="ECO:0000250"/>
    <property type="project" value="UniProtKB"/>
</dbReference>
<dbReference type="GO" id="GO:0032259">
    <property type="term" value="P:methylation"/>
    <property type="evidence" value="ECO:0007669"/>
    <property type="project" value="UniProtKB-KW"/>
</dbReference>
<dbReference type="GO" id="GO:1904262">
    <property type="term" value="P:negative regulation of TORC1 signaling"/>
    <property type="evidence" value="ECO:0000318"/>
    <property type="project" value="GO_Central"/>
</dbReference>
<dbReference type="GO" id="GO:1903432">
    <property type="term" value="P:regulation of TORC1 signaling"/>
    <property type="evidence" value="ECO:0000250"/>
    <property type="project" value="UniProtKB"/>
</dbReference>
<dbReference type="FunFam" id="3.40.50.150:FF:000089">
    <property type="entry name" value="S-adenosylmethionine sensor upstream of mTORC1"/>
    <property type="match status" value="1"/>
</dbReference>
<dbReference type="Gene3D" id="3.40.50.150">
    <property type="entry name" value="Vaccinia Virus protein VP39"/>
    <property type="match status" value="1"/>
</dbReference>
<dbReference type="HAMAP" id="MF_03044">
    <property type="entry name" value="BMT2"/>
    <property type="match status" value="1"/>
</dbReference>
<dbReference type="InterPro" id="IPR021867">
    <property type="entry name" value="Bmt2/SAMTOR"/>
</dbReference>
<dbReference type="InterPro" id="IPR029063">
    <property type="entry name" value="SAM-dependent_MTases_sf"/>
</dbReference>
<dbReference type="PANTHER" id="PTHR21008:SF0">
    <property type="entry name" value="S-ADENOSYLMETHIONINE SENSOR UPSTREAM OF MTORC1"/>
    <property type="match status" value="1"/>
</dbReference>
<dbReference type="PANTHER" id="PTHR21008">
    <property type="entry name" value="S-ADENOSYLMETHIONINE SENSOR UPSTREAM OF MTORC1-RELATED"/>
    <property type="match status" value="1"/>
</dbReference>
<dbReference type="SUPFAM" id="SSF53335">
    <property type="entry name" value="S-adenosyl-L-methionine-dependent methyltransferases"/>
    <property type="match status" value="1"/>
</dbReference>
<reference key="1">
    <citation type="submission" date="2006-08" db="EMBL/GenBank/DDBJ databases">
        <authorList>
            <consortium name="NIH - Zebrafish Gene Collection (ZGC) project"/>
        </authorList>
    </citation>
    <scope>NUCLEOTIDE SEQUENCE [LARGE SCALE MRNA]</scope>
    <source>
        <tissue>Embryo</tissue>
    </source>
</reference>
<keyword id="KW-0489">Methyltransferase</keyword>
<keyword id="KW-1185">Reference proteome</keyword>
<keyword id="KW-0949">S-adenosyl-L-methionine</keyword>
<keyword id="KW-0808">Transferase</keyword>
<comment type="function">
    <text evidence="1">S-adenosyl-L-methionine-binding protein that acts as an inhibitor of mTORC1 signaling via interaction with the GATOR1 and KICSTOR complexes. Acts as a sensor of S-adenosyl-L-methionine to signal methionine sufficiency to mTORC1: in presence of methionine, binds S-adenosyl-L-methionine, leading to disrupt interaction with the GATOR1 and KICSTOR complexes and promote mTORC1 signaling. Upon methionine starvation, S-adenosyl-L-methionine levels are reduced, thereby promoting the association with GATOR1 and KICSTOR, leading to inhibit mTORC1 signaling. Probably also acts as a S-adenosyl-L-methionine-dependent methyltransferase.</text>
</comment>
<comment type="subunit">
    <text evidence="1">Interacts with the GATOR1 complex; interaction is disrupted when samtor binds S-adenosyl-L-methionine. Interacts with the KICSTOR complex; interaction is disrupted when bmt2/samtor binds S-adenosyl-L-methionine.</text>
</comment>
<comment type="similarity">
    <text evidence="1">Belongs to the BMT2/SAMTOR family.</text>
</comment>
<organism>
    <name type="scientific">Danio rerio</name>
    <name type="common">Zebrafish</name>
    <name type="synonym">Brachydanio rerio</name>
    <dbReference type="NCBI Taxonomy" id="7955"/>
    <lineage>
        <taxon>Eukaryota</taxon>
        <taxon>Metazoa</taxon>
        <taxon>Chordata</taxon>
        <taxon>Craniata</taxon>
        <taxon>Vertebrata</taxon>
        <taxon>Euteleostomi</taxon>
        <taxon>Actinopterygii</taxon>
        <taxon>Neopterygii</taxon>
        <taxon>Teleostei</taxon>
        <taxon>Ostariophysi</taxon>
        <taxon>Cypriniformes</taxon>
        <taxon>Danionidae</taxon>
        <taxon>Danioninae</taxon>
        <taxon>Danio</taxon>
    </lineage>
</organism>
<sequence>MDLRSSAETDPDLSENHPGSVPAELQSRKQEQEKLSGVVKSVHRKLRRKYIEVGDFDKIWREHCEDEQTLSEYAMAMKNLADNHWANKCEGEGRIEWCRSVCQEYFQDGGMRRVLEKDEKSARHATAGNANTDTNAPPQLSSISTSSTFQLGKIRLLDVGSCFNPFLKFDEFLTVGIDIVPAVESVYKCDFLNLQLQQPLQLASDALDAFLRQLRGPIDALPAELFHVVVFSLLLSYFPSPYQRWLCCKKAHELLTLNGLLLIITPDSSHQGRHALMMRSWRVAVESLGFKRYKYVKFSHMHLIAFRKVSPTTSSDLVSRNYPEMLYIPQDFNTFDEDGFADCYEPPRSDFEDDQMACSFAELPETPYDSDSGESQSSSAPFYELEDPILLQS</sequence>
<feature type="chain" id="PRO_0000321542" description="S-adenosylmethionine sensor upstream of mTORC1">
    <location>
        <begin position="1"/>
        <end position="393"/>
    </location>
</feature>
<feature type="region of interest" description="Disordered" evidence="2">
    <location>
        <begin position="1"/>
        <end position="35"/>
    </location>
</feature>
<feature type="region of interest" description="Disordered" evidence="2">
    <location>
        <begin position="118"/>
        <end position="141"/>
    </location>
</feature>
<feature type="region of interest" description="Disordered" evidence="2">
    <location>
        <begin position="362"/>
        <end position="393"/>
    </location>
</feature>
<feature type="compositionally biased region" description="Low complexity" evidence="2">
    <location>
        <begin position="125"/>
        <end position="136"/>
    </location>
</feature>
<feature type="binding site" evidence="1">
    <location>
        <position position="94"/>
    </location>
    <ligand>
        <name>S-adenosyl-L-methionine</name>
        <dbReference type="ChEBI" id="CHEBI:59789"/>
    </ligand>
</feature>
<feature type="binding site" evidence="1">
    <location>
        <position position="160"/>
    </location>
    <ligand>
        <name>S-adenosyl-L-methionine</name>
        <dbReference type="ChEBI" id="CHEBI:59789"/>
    </ligand>
</feature>
<feature type="binding site" evidence="1">
    <location>
        <position position="178"/>
    </location>
    <ligand>
        <name>S-adenosyl-L-methionine</name>
        <dbReference type="ChEBI" id="CHEBI:59789"/>
    </ligand>
</feature>
<feature type="binding site" evidence="1">
    <location>
        <position position="190"/>
    </location>
    <ligand>
        <name>S-adenosyl-L-methionine</name>
        <dbReference type="ChEBI" id="CHEBI:59789"/>
    </ligand>
</feature>
<feature type="binding site" evidence="1">
    <location>
        <position position="191"/>
    </location>
    <ligand>
        <name>S-adenosyl-L-methionine</name>
        <dbReference type="ChEBI" id="CHEBI:59789"/>
    </ligand>
</feature>
<feature type="binding site" evidence="1">
    <location>
        <position position="232"/>
    </location>
    <ligand>
        <name>S-adenosyl-L-methionine</name>
        <dbReference type="ChEBI" id="CHEBI:59789"/>
    </ligand>
</feature>